<reference key="1">
    <citation type="journal article" date="2000" name="Nature">
        <title>Complete genome sequence of Pseudomonas aeruginosa PAO1, an opportunistic pathogen.</title>
        <authorList>
            <person name="Stover C.K."/>
            <person name="Pham X.-Q.T."/>
            <person name="Erwin A.L."/>
            <person name="Mizoguchi S.D."/>
            <person name="Warrener P."/>
            <person name="Hickey M.J."/>
            <person name="Brinkman F.S.L."/>
            <person name="Hufnagle W.O."/>
            <person name="Kowalik D.J."/>
            <person name="Lagrou M."/>
            <person name="Garber R.L."/>
            <person name="Goltry L."/>
            <person name="Tolentino E."/>
            <person name="Westbrock-Wadman S."/>
            <person name="Yuan Y."/>
            <person name="Brody L.L."/>
            <person name="Coulter S.N."/>
            <person name="Folger K.R."/>
            <person name="Kas A."/>
            <person name="Larbig K."/>
            <person name="Lim R.M."/>
            <person name="Smith K.A."/>
            <person name="Spencer D.H."/>
            <person name="Wong G.K.-S."/>
            <person name="Wu Z."/>
            <person name="Paulsen I.T."/>
            <person name="Reizer J."/>
            <person name="Saier M.H. Jr."/>
            <person name="Hancock R.E.W."/>
            <person name="Lory S."/>
            <person name="Olson M.V."/>
        </authorList>
    </citation>
    <scope>NUCLEOTIDE SEQUENCE [LARGE SCALE GENOMIC DNA]</scope>
    <source>
        <strain>ATCC 15692 / DSM 22644 / CIP 104116 / JCM 14847 / LMG 12228 / 1C / PRS 101 / PAO1</strain>
    </source>
</reference>
<reference key="2">
    <citation type="journal article" date="1997" name="J. Bacteriol.">
        <title>A transcriptional activator, FleQ, regulates mucin adhesion and flagellar gene expression in Pseudomonas aeruginosa in a cascade manner.</title>
        <authorList>
            <person name="Arora S.K."/>
            <person name="Ritchings B.W."/>
            <person name="Almira E.C."/>
            <person name="Lory S."/>
            <person name="Ramphal R."/>
        </authorList>
    </citation>
    <scope>FUNCTION</scope>
    <scope>DISRUPTION PHENOTYPE</scope>
</reference>
<reference key="3">
    <citation type="journal article" date="2001" name="J. Bacteriol.">
        <title>Interaction of the antiactivator FleN with the transcriptional activator FleQ regulates flagellar number in Pseudomonas aeruginosa.</title>
        <authorList>
            <person name="Dasgupta N."/>
            <person name="Ramphal R."/>
        </authorList>
    </citation>
    <scope>FUNCTION</scope>
    <source>
        <strain>PAK</strain>
    </source>
</reference>
<reference key="4">
    <citation type="journal article" date="2012" name="Nucleic Acids Res.">
        <title>The FleQ protein from Pseudomonas aeruginosa functions as both a repressor and an activator to control gene expression from the pel operon promoter in response to c-di-GMP.</title>
        <authorList>
            <person name="Baraquet C."/>
            <person name="Murakami K."/>
            <person name="Parsek M.R."/>
            <person name="Harwood C.S."/>
        </authorList>
    </citation>
    <scope>FUNCTION</scope>
    <scope>INTERACTION WITH FLEN</scope>
</reference>
<reference evidence="7" key="5">
    <citation type="journal article" date="2015" name="J. Struct. Biol.">
        <title>The REC domain mediated dimerization is critical for FleQ from Pseudomonas aeruginosa to function as a c-di-GMP receptor and flagella gene regulator.</title>
        <authorList>
            <person name="Su T."/>
            <person name="Liu S."/>
            <person name="Wang K."/>
            <person name="Chi K."/>
            <person name="Zhu D."/>
            <person name="Wei T."/>
            <person name="Huang Y."/>
            <person name="Guo L."/>
            <person name="Hu W."/>
            <person name="Xu S."/>
            <person name="Lin Z."/>
            <person name="Gu L."/>
        </authorList>
    </citation>
    <scope>X-RAY CRYSTALLOGRAPHY (2.30 ANGSTROMS) OF 1-139</scope>
    <scope>FUNCTION</scope>
    <scope>DOMAIN</scope>
    <scope>DISRUPTION PHENOTYPE</scope>
    <scope>SUBUNIT</scope>
    <scope>MUTAGENESIS OF PHE-26; HIS-119; ARG-144 AND ARG-185</scope>
</reference>
<reference evidence="8 9 10" key="6">
    <citation type="journal article" date="2016" name="Proc. Natl. Acad. Sci. U.S.A.">
        <title>Mechanistic insights into c-di-GMP-dependent control of the biofilm regulator FleQ from Pseudomonas aeruginosa.</title>
        <authorList>
            <person name="Matsuyama B.Y."/>
            <person name="Krasteva P.V."/>
            <person name="Baraquet C."/>
            <person name="Harwood C.S."/>
            <person name="Sondermann H."/>
            <person name="Navarro M.V."/>
        </authorList>
    </citation>
    <scope>X-RAY CRYSTALLOGRAPHY (1.80 ANGSTROMS) OF 137-394 IN COMPLEX WITH ADP AND CYCLIC DIGUANOSINE MONOPHOSPHATE</scope>
    <scope>SUBUNIT</scope>
    <scope>ACTIVITY REGULATION</scope>
    <scope>MUTAGENESIS OF ARG-185; ASN-186; GLU-330 AND ARG-334</scope>
</reference>
<dbReference type="EMBL" id="AE004091">
    <property type="protein sequence ID" value="AAG04486.1"/>
    <property type="molecule type" value="Genomic_DNA"/>
</dbReference>
<dbReference type="PIR" id="B83508">
    <property type="entry name" value="B83508"/>
</dbReference>
<dbReference type="RefSeq" id="NP_249788.1">
    <property type="nucleotide sequence ID" value="NC_002516.2"/>
</dbReference>
<dbReference type="RefSeq" id="WP_003086448.1">
    <property type="nucleotide sequence ID" value="NZ_QZGE01000006.1"/>
</dbReference>
<dbReference type="PDB" id="4WXM">
    <property type="method" value="X-ray"/>
    <property type="resolution" value="2.30 A"/>
    <property type="chains" value="A/B/C/D/E=1-139"/>
</dbReference>
<dbReference type="PDB" id="5EXP">
    <property type="method" value="X-ray"/>
    <property type="resolution" value="1.80 A"/>
    <property type="chains" value="A=137-394"/>
</dbReference>
<dbReference type="PDB" id="5EXS">
    <property type="method" value="X-ray"/>
    <property type="resolution" value="2.50 A"/>
    <property type="chains" value="A=137-394"/>
</dbReference>
<dbReference type="PDB" id="5EXT">
    <property type="method" value="X-ray"/>
    <property type="resolution" value="2.40 A"/>
    <property type="chains" value="A=137-394"/>
</dbReference>
<dbReference type="PDB" id="5EXX">
    <property type="method" value="X-ray"/>
    <property type="resolution" value="3.31 A"/>
    <property type="chains" value="A=137-477"/>
</dbReference>
<dbReference type="PDB" id="6J7E">
    <property type="method" value="X-ray"/>
    <property type="resolution" value="2.40 A"/>
    <property type="chains" value="A=142-399"/>
</dbReference>
<dbReference type="PDB" id="6JDI">
    <property type="method" value="X-ray"/>
    <property type="resolution" value="1.95 A"/>
    <property type="chains" value="A=142-399"/>
</dbReference>
<dbReference type="PDB" id="6JDL">
    <property type="method" value="X-ray"/>
    <property type="resolution" value="2.25 A"/>
    <property type="chains" value="A=142-399"/>
</dbReference>
<dbReference type="PDB" id="7EJW">
    <property type="method" value="X-ray"/>
    <property type="resolution" value="1.98 A"/>
    <property type="chains" value="C/D=142-395"/>
</dbReference>
<dbReference type="PDB" id="8P53">
    <property type="method" value="EM"/>
    <property type="resolution" value="2.70 A"/>
    <property type="chains" value="C/D/E/F=2-490"/>
</dbReference>
<dbReference type="PDB" id="8PB9">
    <property type="method" value="EM"/>
    <property type="resolution" value="3.30 A"/>
    <property type="chains" value="C/D/E=2-394"/>
</dbReference>
<dbReference type="PDBsum" id="4WXM"/>
<dbReference type="PDBsum" id="5EXP"/>
<dbReference type="PDBsum" id="5EXS"/>
<dbReference type="PDBsum" id="5EXT"/>
<dbReference type="PDBsum" id="5EXX"/>
<dbReference type="PDBsum" id="6J7E"/>
<dbReference type="PDBsum" id="6JDI"/>
<dbReference type="PDBsum" id="6JDL"/>
<dbReference type="PDBsum" id="7EJW"/>
<dbReference type="PDBsum" id="8P53"/>
<dbReference type="PDBsum" id="8PB9"/>
<dbReference type="EMDB" id="EMD-17445"/>
<dbReference type="EMDB" id="EMD-17581"/>
<dbReference type="SMR" id="G3XCV0"/>
<dbReference type="STRING" id="208964.PA1097"/>
<dbReference type="PaxDb" id="208964-PA1097"/>
<dbReference type="GeneID" id="881960"/>
<dbReference type="KEGG" id="pae:PA1097"/>
<dbReference type="PATRIC" id="fig|208964.12.peg.1136"/>
<dbReference type="PseudoCAP" id="PA1097"/>
<dbReference type="HOGENOM" id="CLU_000445_0_7_6"/>
<dbReference type="InParanoid" id="G3XCV0"/>
<dbReference type="OrthoDB" id="9804019at2"/>
<dbReference type="PhylomeDB" id="G3XCV0"/>
<dbReference type="BioCyc" id="PAER208964:G1FZ6-1120-MONOMER"/>
<dbReference type="EvolutionaryTrace" id="G3XCV0"/>
<dbReference type="Proteomes" id="UP000002438">
    <property type="component" value="Chromosome"/>
</dbReference>
<dbReference type="CollecTF" id="EXPREG_000004a0"/>
<dbReference type="GO" id="GO:0032993">
    <property type="term" value="C:protein-DNA complex"/>
    <property type="evidence" value="ECO:0000315"/>
    <property type="project" value="CollecTF"/>
</dbReference>
<dbReference type="GO" id="GO:0005524">
    <property type="term" value="F:ATP binding"/>
    <property type="evidence" value="ECO:0007669"/>
    <property type="project" value="UniProtKB-KW"/>
</dbReference>
<dbReference type="GO" id="GO:0016887">
    <property type="term" value="F:ATP hydrolysis activity"/>
    <property type="evidence" value="ECO:0007669"/>
    <property type="project" value="InterPro"/>
</dbReference>
<dbReference type="GO" id="GO:0000987">
    <property type="term" value="F:cis-regulatory region sequence-specific DNA binding"/>
    <property type="evidence" value="ECO:0000314"/>
    <property type="project" value="PseudoCAP"/>
</dbReference>
<dbReference type="GO" id="GO:0035438">
    <property type="term" value="F:cyclic-di-GMP binding"/>
    <property type="evidence" value="ECO:0000314"/>
    <property type="project" value="PseudoCAP"/>
</dbReference>
<dbReference type="GO" id="GO:0001216">
    <property type="term" value="F:DNA-binding transcription activator activity"/>
    <property type="evidence" value="ECO:0000315"/>
    <property type="project" value="PseudoCAP"/>
</dbReference>
<dbReference type="GO" id="GO:0001217">
    <property type="term" value="F:DNA-binding transcription repressor activity"/>
    <property type="evidence" value="ECO:0000315"/>
    <property type="project" value="PseudoCAP"/>
</dbReference>
<dbReference type="GO" id="GO:0000976">
    <property type="term" value="F:transcription cis-regulatory region binding"/>
    <property type="evidence" value="ECO:0000315"/>
    <property type="project" value="CollecTF"/>
</dbReference>
<dbReference type="GO" id="GO:0006351">
    <property type="term" value="P:DNA-templated transcription"/>
    <property type="evidence" value="ECO:0000314"/>
    <property type="project" value="PseudoCAP"/>
</dbReference>
<dbReference type="GO" id="GO:1901202">
    <property type="term" value="P:negative regulation of extracellular matrix assembly"/>
    <property type="evidence" value="ECO:0000315"/>
    <property type="project" value="PseudoCAP"/>
</dbReference>
<dbReference type="GO" id="GO:0010811">
    <property type="term" value="P:positive regulation of cell-substrate adhesion"/>
    <property type="evidence" value="ECO:0000315"/>
    <property type="project" value="PseudoCAP"/>
</dbReference>
<dbReference type="GO" id="GO:2000155">
    <property type="term" value="P:positive regulation of cilium-dependent cell motility"/>
    <property type="evidence" value="ECO:0000315"/>
    <property type="project" value="PseudoCAP"/>
</dbReference>
<dbReference type="GO" id="GO:0045893">
    <property type="term" value="P:positive regulation of DNA-templated transcription"/>
    <property type="evidence" value="ECO:0000318"/>
    <property type="project" value="GO_Central"/>
</dbReference>
<dbReference type="GO" id="GO:1902021">
    <property type="term" value="P:regulation of bacterial-type flagellum-dependent cell motility"/>
    <property type="evidence" value="ECO:0000315"/>
    <property type="project" value="PseudoCAP"/>
</dbReference>
<dbReference type="GO" id="GO:0006355">
    <property type="term" value="P:regulation of DNA-templated transcription"/>
    <property type="evidence" value="ECO:0000314"/>
    <property type="project" value="PseudoCAP"/>
</dbReference>
<dbReference type="CDD" id="cd00009">
    <property type="entry name" value="AAA"/>
    <property type="match status" value="1"/>
</dbReference>
<dbReference type="FunFam" id="3.40.50.300:FF:000006">
    <property type="entry name" value="DNA-binding transcriptional regulator NtrC"/>
    <property type="match status" value="1"/>
</dbReference>
<dbReference type="FunFam" id="1.10.10.60:FF:000260">
    <property type="entry name" value="Fis family transcriptional regulator"/>
    <property type="match status" value="1"/>
</dbReference>
<dbReference type="FunFam" id="1.10.8.60:FF:000037">
    <property type="entry name" value="Sigma-54-dependent Fis family transcriptional regulator"/>
    <property type="match status" value="1"/>
</dbReference>
<dbReference type="Gene3D" id="1.10.8.60">
    <property type="match status" value="1"/>
</dbReference>
<dbReference type="Gene3D" id="3.40.50.2300">
    <property type="match status" value="1"/>
</dbReference>
<dbReference type="Gene3D" id="1.10.10.60">
    <property type="entry name" value="Homeodomain-like"/>
    <property type="match status" value="1"/>
</dbReference>
<dbReference type="Gene3D" id="3.40.50.300">
    <property type="entry name" value="P-loop containing nucleotide triphosphate hydrolases"/>
    <property type="match status" value="1"/>
</dbReference>
<dbReference type="InterPro" id="IPR003593">
    <property type="entry name" value="AAA+_ATPase"/>
</dbReference>
<dbReference type="InterPro" id="IPR011006">
    <property type="entry name" value="CheY-like_superfamily"/>
</dbReference>
<dbReference type="InterPro" id="IPR010518">
    <property type="entry name" value="FleQ"/>
</dbReference>
<dbReference type="InterPro" id="IPR009057">
    <property type="entry name" value="Homeodomain-like_sf"/>
</dbReference>
<dbReference type="InterPro" id="IPR002197">
    <property type="entry name" value="HTH_Fis"/>
</dbReference>
<dbReference type="InterPro" id="IPR027417">
    <property type="entry name" value="P-loop_NTPase"/>
</dbReference>
<dbReference type="InterPro" id="IPR002078">
    <property type="entry name" value="Sigma_54_int"/>
</dbReference>
<dbReference type="InterPro" id="IPR025662">
    <property type="entry name" value="Sigma_54_int_dom_ATP-bd_1"/>
</dbReference>
<dbReference type="InterPro" id="IPR025943">
    <property type="entry name" value="Sigma_54_int_dom_ATP-bd_2"/>
</dbReference>
<dbReference type="InterPro" id="IPR025944">
    <property type="entry name" value="Sigma_54_int_dom_CS"/>
</dbReference>
<dbReference type="PANTHER" id="PTHR32071:SF117">
    <property type="entry name" value="PTS-DEPENDENT DIHYDROXYACETONE KINASE OPERON REGULATORY PROTEIN-RELATED"/>
    <property type="match status" value="1"/>
</dbReference>
<dbReference type="PANTHER" id="PTHR32071">
    <property type="entry name" value="TRANSCRIPTIONAL REGULATORY PROTEIN"/>
    <property type="match status" value="1"/>
</dbReference>
<dbReference type="Pfam" id="PF06490">
    <property type="entry name" value="FleQ"/>
    <property type="match status" value="1"/>
</dbReference>
<dbReference type="Pfam" id="PF02954">
    <property type="entry name" value="HTH_8"/>
    <property type="match status" value="1"/>
</dbReference>
<dbReference type="Pfam" id="PF00158">
    <property type="entry name" value="Sigma54_activat"/>
    <property type="match status" value="1"/>
</dbReference>
<dbReference type="PRINTS" id="PR01590">
    <property type="entry name" value="HTHFIS"/>
</dbReference>
<dbReference type="SMART" id="SM00382">
    <property type="entry name" value="AAA"/>
    <property type="match status" value="1"/>
</dbReference>
<dbReference type="SUPFAM" id="SSF52172">
    <property type="entry name" value="CheY-like"/>
    <property type="match status" value="1"/>
</dbReference>
<dbReference type="SUPFAM" id="SSF46689">
    <property type="entry name" value="Homeodomain-like"/>
    <property type="match status" value="1"/>
</dbReference>
<dbReference type="SUPFAM" id="SSF52540">
    <property type="entry name" value="P-loop containing nucleoside triphosphate hydrolases"/>
    <property type="match status" value="1"/>
</dbReference>
<dbReference type="PROSITE" id="PS00675">
    <property type="entry name" value="SIGMA54_INTERACT_1"/>
    <property type="match status" value="1"/>
</dbReference>
<dbReference type="PROSITE" id="PS00676">
    <property type="entry name" value="SIGMA54_INTERACT_2"/>
    <property type="match status" value="1"/>
</dbReference>
<dbReference type="PROSITE" id="PS00688">
    <property type="entry name" value="SIGMA54_INTERACT_3"/>
    <property type="match status" value="1"/>
</dbReference>
<dbReference type="PROSITE" id="PS50045">
    <property type="entry name" value="SIGMA54_INTERACT_4"/>
    <property type="match status" value="1"/>
</dbReference>
<gene>
    <name evidence="6" type="primary">fleQ</name>
    <name type="ordered locus">PA1097</name>
</gene>
<organism>
    <name type="scientific">Pseudomonas aeruginosa (strain ATCC 15692 / DSM 22644 / CIP 104116 / JCM 14847 / LMG 12228 / 1C / PRS 101 / PAO1)</name>
    <dbReference type="NCBI Taxonomy" id="208964"/>
    <lineage>
        <taxon>Bacteria</taxon>
        <taxon>Pseudomonadati</taxon>
        <taxon>Pseudomonadota</taxon>
        <taxon>Gammaproteobacteria</taxon>
        <taxon>Pseudomonadales</taxon>
        <taxon>Pseudomonadaceae</taxon>
        <taxon>Pseudomonas</taxon>
    </lineage>
</organism>
<feature type="chain" id="PRO_0000448537" description="Transcriptional regulator FleQ">
    <location>
        <begin position="1"/>
        <end position="490"/>
    </location>
</feature>
<feature type="binding site" evidence="4 11">
    <location>
        <position position="142"/>
    </location>
    <ligand>
        <name>3',3'-c-di-GMP</name>
        <dbReference type="ChEBI" id="CHEBI:58805"/>
    </ligand>
</feature>
<feature type="binding site" evidence="4 10">
    <location>
        <position position="147"/>
    </location>
    <ligand>
        <name>ADP</name>
        <dbReference type="ChEBI" id="CHEBI:456216"/>
    </ligand>
</feature>
<feature type="binding site" evidence="4 10">
    <location>
        <begin position="177"/>
        <end position="182"/>
    </location>
    <ligand>
        <name>ADP</name>
        <dbReference type="ChEBI" id="CHEBI:456216"/>
    </ligand>
</feature>
<feature type="binding site" evidence="4 11">
    <location>
        <begin position="186"/>
        <end position="189"/>
    </location>
    <ligand>
        <name>3',3'-c-di-GMP</name>
        <dbReference type="ChEBI" id="CHEBI:58805"/>
    </ligand>
</feature>
<feature type="binding site" evidence="4 11">
    <location>
        <begin position="330"/>
        <end position="341"/>
    </location>
    <ligand>
        <name>3',3'-c-di-GMP</name>
        <dbReference type="ChEBI" id="CHEBI:58805"/>
    </ligand>
</feature>
<feature type="binding site" evidence="4 10">
    <location>
        <position position="334"/>
    </location>
    <ligand>
        <name>ADP</name>
        <dbReference type="ChEBI" id="CHEBI:456216"/>
    </ligand>
</feature>
<feature type="binding site" evidence="4 10">
    <location>
        <position position="363"/>
    </location>
    <ligand>
        <name>ADP</name>
        <dbReference type="ChEBI" id="CHEBI:456216"/>
    </ligand>
</feature>
<feature type="mutagenesis site" description="Almost complete loss of biofilm formation." evidence="3">
    <original>F</original>
    <variation>N</variation>
    <location>
        <position position="26"/>
    </location>
</feature>
<feature type="mutagenesis site" description="About 50% loss of biofilm formation." evidence="3">
    <original>H</original>
    <variation>N</variation>
    <location>
        <position position="119"/>
    </location>
</feature>
<feature type="mutagenesis site" description="Almost complete loss of biofilm formation." evidence="3">
    <original>R</original>
    <variation>A</variation>
    <location>
        <position position="144"/>
    </location>
</feature>
<feature type="mutagenesis site" description="Almost complete loss of biofilm formation." evidence="3">
    <original>R</original>
    <variation>A</variation>
    <location>
        <position position="185"/>
    </location>
</feature>
<feature type="mutagenesis site" description="More than 75% repressed pel transcription." evidence="4">
    <original>R</original>
    <variation>E</variation>
    <location>
        <position position="185"/>
    </location>
</feature>
<feature type="mutagenesis site" description="More than 75% repressed pel transcription." evidence="4">
    <original>N</original>
    <variation>A</variation>
    <location>
        <position position="186"/>
    </location>
</feature>
<feature type="mutagenesis site" description="More than 75% repressed pel transcription." evidence="4">
    <original>E</original>
    <variation>A</variation>
    <location>
        <position position="330"/>
    </location>
</feature>
<feature type="mutagenesis site" description="More than 75% repressed pel transcription." evidence="4">
    <original>R</original>
    <variation>E</variation>
    <location>
        <position position="334"/>
    </location>
</feature>
<feature type="strand" evidence="12">
    <location>
        <begin position="6"/>
        <end position="10"/>
    </location>
</feature>
<feature type="helix" evidence="12">
    <location>
        <begin position="14"/>
        <end position="26"/>
    </location>
</feature>
<feature type="strand" evidence="12">
    <location>
        <begin position="31"/>
        <end position="34"/>
    </location>
</feature>
<feature type="turn" evidence="12">
    <location>
        <begin position="36"/>
        <end position="38"/>
    </location>
</feature>
<feature type="helix" evidence="12">
    <location>
        <begin position="39"/>
        <end position="43"/>
    </location>
</feature>
<feature type="strand" evidence="12">
    <location>
        <begin position="46"/>
        <end position="48"/>
    </location>
</feature>
<feature type="helix" evidence="12">
    <location>
        <begin position="49"/>
        <end position="51"/>
    </location>
</feature>
<feature type="strand" evidence="12">
    <location>
        <begin position="52"/>
        <end position="57"/>
    </location>
</feature>
<feature type="helix" evidence="12">
    <location>
        <begin position="65"/>
        <end position="76"/>
    </location>
</feature>
<feature type="strand" evidence="12">
    <location>
        <begin position="82"/>
        <end position="87"/>
    </location>
</feature>
<feature type="helix" evidence="12">
    <location>
        <begin position="95"/>
        <end position="98"/>
    </location>
</feature>
<feature type="strand" evidence="12">
    <location>
        <begin position="101"/>
        <end position="105"/>
    </location>
</feature>
<feature type="helix" evidence="12">
    <location>
        <begin position="111"/>
        <end position="128"/>
    </location>
</feature>
<feature type="helix" evidence="13">
    <location>
        <begin position="151"/>
        <end position="163"/>
    </location>
</feature>
<feature type="strand" evidence="13">
    <location>
        <begin position="170"/>
        <end position="173"/>
    </location>
</feature>
<feature type="helix" evidence="13">
    <location>
        <begin position="180"/>
        <end position="189"/>
    </location>
</feature>
<feature type="turn" evidence="13">
    <location>
        <begin position="192"/>
        <end position="195"/>
    </location>
</feature>
<feature type="strand" evidence="13">
    <location>
        <begin position="198"/>
        <end position="202"/>
    </location>
</feature>
<feature type="turn" evidence="13">
    <location>
        <begin position="203"/>
        <end position="205"/>
    </location>
</feature>
<feature type="helix" evidence="13">
    <location>
        <begin position="208"/>
        <end position="216"/>
    </location>
</feature>
<feature type="strand" evidence="14">
    <location>
        <begin position="220"/>
        <end position="223"/>
    </location>
</feature>
<feature type="helix" evidence="13">
    <location>
        <begin position="233"/>
        <end position="236"/>
    </location>
</feature>
<feature type="turn" evidence="13">
    <location>
        <begin position="237"/>
        <end position="239"/>
    </location>
</feature>
<feature type="strand" evidence="13">
    <location>
        <begin position="240"/>
        <end position="245"/>
    </location>
</feature>
<feature type="helix" evidence="13">
    <location>
        <begin position="247"/>
        <end position="249"/>
    </location>
</feature>
<feature type="helix" evidence="13">
    <location>
        <begin position="252"/>
        <end position="264"/>
    </location>
</feature>
<feature type="strand" evidence="13">
    <location>
        <begin position="265"/>
        <end position="267"/>
    </location>
</feature>
<feature type="strand" evidence="14">
    <location>
        <begin position="275"/>
        <end position="277"/>
    </location>
</feature>
<feature type="strand" evidence="13">
    <location>
        <begin position="281"/>
        <end position="288"/>
    </location>
</feature>
<feature type="helix" evidence="13">
    <location>
        <begin position="290"/>
        <end position="295"/>
    </location>
</feature>
<feature type="strand" evidence="15">
    <location>
        <begin position="297"/>
        <end position="299"/>
    </location>
</feature>
<feature type="helix" evidence="13">
    <location>
        <begin position="301"/>
        <end position="307"/>
    </location>
</feature>
<feature type="strand" evidence="13">
    <location>
        <begin position="309"/>
        <end position="313"/>
    </location>
</feature>
<feature type="helix" evidence="13">
    <location>
        <begin position="317"/>
        <end position="319"/>
    </location>
</feature>
<feature type="helix" evidence="13">
    <location>
        <begin position="321"/>
        <end position="323"/>
    </location>
</feature>
<feature type="helix" evidence="13">
    <location>
        <begin position="324"/>
        <end position="337"/>
    </location>
</feature>
<feature type="strand" evidence="13">
    <location>
        <begin position="343"/>
        <end position="345"/>
    </location>
</feature>
<feature type="helix" evidence="13">
    <location>
        <begin position="347"/>
        <end position="353"/>
    </location>
</feature>
<feature type="helix" evidence="13">
    <location>
        <begin position="361"/>
        <end position="375"/>
    </location>
</feature>
<feature type="strand" evidence="13">
    <location>
        <begin position="379"/>
        <end position="381"/>
    </location>
</feature>
<feature type="helix" evidence="13">
    <location>
        <begin position="383"/>
        <end position="385"/>
    </location>
</feature>
<feature type="helix" evidence="13">
    <location>
        <begin position="388"/>
        <end position="390"/>
    </location>
</feature>
<sequence length="490" mass="55277">MWRETKLLLIDDNLDRSRDLAVILNFLGEDQLTCNSEDWREVAAGLSNSREALCVLLGSVESKGGAVELLKQLASWDEYLPILLIGEPAPADWPEELRRRVLASLEMPPSYNKLLDSLHRAQVYREMYDQARERGRSREPNLFRSLVGTSRAIQQVRQMMQQVADTDASVLILGESGTGKEVVARNLHYHSKRREGPFVPVNCGAIPAELLESELFGHEKGAFTGAITSRAGRFELANGGTLFLDEIGDMPLPMQVKLLRVLQERTFERVGSNKTQNVDVRIIAATHKNLEKMIEDGTFREDLYYRLNVFPIEMAPLRERVEDIALLLNELISRMEHEKRGSIRFNSAAIMSLCRHDWPGNVRELANLVERLAIMHPYGVIGVGELPKKFRHVDDEDEQLASSLREELEERAAINAGLPGMDAPAMLPAEGLDLKDYLANLEQGLIQQALDDAGGVVARAAERLRIRRTTLVEKMRKYGMSRRDDDLSDD</sequence>
<evidence type="ECO:0000269" key="1">
    <source>
    </source>
</evidence>
<evidence type="ECO:0000269" key="2">
    <source>
    </source>
</evidence>
<evidence type="ECO:0000269" key="3">
    <source>
    </source>
</evidence>
<evidence type="ECO:0000269" key="4">
    <source>
    </source>
</evidence>
<evidence type="ECO:0000269" key="5">
    <source>
    </source>
</evidence>
<evidence type="ECO:0000303" key="6">
    <source>
    </source>
</evidence>
<evidence type="ECO:0007744" key="7">
    <source>
        <dbReference type="PDB" id="4WXM"/>
    </source>
</evidence>
<evidence type="ECO:0007744" key="8">
    <source>
        <dbReference type="PDB" id="5EXP"/>
    </source>
</evidence>
<evidence type="ECO:0007744" key="9">
    <source>
        <dbReference type="PDB" id="5EXS"/>
    </source>
</evidence>
<evidence type="ECO:0007744" key="10">
    <source>
        <dbReference type="PDB" id="5EXT"/>
    </source>
</evidence>
<evidence type="ECO:0007744" key="11">
    <source>
        <dbReference type="PDB" id="5EXX"/>
    </source>
</evidence>
<evidence type="ECO:0007829" key="12">
    <source>
        <dbReference type="PDB" id="4WXM"/>
    </source>
</evidence>
<evidence type="ECO:0007829" key="13">
    <source>
        <dbReference type="PDB" id="5EXP"/>
    </source>
</evidence>
<evidence type="ECO:0007829" key="14">
    <source>
        <dbReference type="PDB" id="5EXT"/>
    </source>
</evidence>
<evidence type="ECO:0007829" key="15">
    <source>
        <dbReference type="PDB" id="5EXX"/>
    </source>
</evidence>
<keyword id="KW-0002">3D-structure</keyword>
<keyword id="KW-0067">ATP-binding</keyword>
<keyword id="KW-0238">DNA-binding</keyword>
<keyword id="KW-0547">Nucleotide-binding</keyword>
<keyword id="KW-1185">Reference proteome</keyword>
<keyword id="KW-0804">Transcription</keyword>
<keyword id="KW-0805">Transcription regulation</keyword>
<proteinExistence type="evidence at protein level"/>
<comment type="function">
    <text evidence="1 2 3 5">AAA+ ATPase enhancer-binding protein that acts as a transcription regulator and plays a role in the modulation of mucin adhesion and flagellar gene expression (PubMed:11673434, PubMed:26362077, PubMed:9287015). In addition to flagella genes, also regulates expression of biofilm-related genes (PubMed:22581773). Functions as a transcriptional repressor in the absence of c-di-GMP and as an activator when c-di-GMP is present (PubMed:22581773).</text>
</comment>
<comment type="activity regulation">
    <text evidence="4">C-di-GMP interaction leads to active site obstruction, hexameric ring destabilization thus relieving DNA bending and activating gene transcription.</text>
</comment>
<comment type="subunit">
    <text evidence="2 3 4">Forms homodimers (PubMed:26362077). Forms homohexamers that inhibit transcription initiation (PubMed:26712005). Interacts with FleN; this complex is formed in the presence as well as in the absence of c-di-GMP or ATP (PubMed:22581773).</text>
</comment>
<comment type="domain">
    <text evidence="3">The N-terminal FleQ domain mediates dimerization and is essential for function.</text>
</comment>
<comment type="disruption phenotype">
    <text evidence="3 5">Deletion results in the concomitant loss of motility, mucin adhesion, and the ability to synthesize flagellin.</text>
</comment>
<protein>
    <recommendedName>
        <fullName evidence="6">Transcriptional regulator FleQ</fullName>
    </recommendedName>
</protein>
<accession>G3XCV0</accession>
<name>FLEQ_PSEAE</name>